<dbReference type="EMBL" id="AP006627">
    <property type="protein sequence ID" value="BAD65060.1"/>
    <property type="molecule type" value="Genomic_DNA"/>
</dbReference>
<dbReference type="RefSeq" id="WP_011247368.1">
    <property type="nucleotide sequence ID" value="NC_006582.1"/>
</dbReference>
<dbReference type="SMR" id="Q5WF00"/>
<dbReference type="STRING" id="66692.ABC2525"/>
<dbReference type="KEGG" id="bcl:ABC2525"/>
<dbReference type="eggNOG" id="COG2761">
    <property type="taxonomic scope" value="Bacteria"/>
</dbReference>
<dbReference type="HOGENOM" id="CLU_069785_0_0_9"/>
<dbReference type="OrthoDB" id="9813770at2"/>
<dbReference type="Proteomes" id="UP000001168">
    <property type="component" value="Chromosome"/>
</dbReference>
<dbReference type="GO" id="GO:0005737">
    <property type="term" value="C:cytoplasm"/>
    <property type="evidence" value="ECO:0007669"/>
    <property type="project" value="UniProtKB-SubCell"/>
</dbReference>
<dbReference type="CDD" id="cd03025">
    <property type="entry name" value="DsbA_FrnE_like"/>
    <property type="match status" value="1"/>
</dbReference>
<dbReference type="Gene3D" id="3.40.30.10">
    <property type="entry name" value="Glutaredoxin"/>
    <property type="match status" value="1"/>
</dbReference>
<dbReference type="HAMAP" id="MF_02245">
    <property type="entry name" value="Adapter_SpxH"/>
    <property type="match status" value="1"/>
</dbReference>
<dbReference type="InterPro" id="IPR046404">
    <property type="entry name" value="Adapter_SpxH"/>
</dbReference>
<dbReference type="InterPro" id="IPR036249">
    <property type="entry name" value="Thioredoxin-like_sf"/>
</dbReference>
<dbReference type="PANTHER" id="PTHR13887:SF47">
    <property type="entry name" value="CLPXP ADAPTER PROTEIN SPXH"/>
    <property type="match status" value="1"/>
</dbReference>
<dbReference type="PANTHER" id="PTHR13887">
    <property type="entry name" value="GLUTATHIONE S-TRANSFERASE KAPPA"/>
    <property type="match status" value="1"/>
</dbReference>
<dbReference type="Pfam" id="PF13743">
    <property type="entry name" value="Thioredoxin_5"/>
    <property type="match status" value="1"/>
</dbReference>
<dbReference type="SUPFAM" id="SSF52833">
    <property type="entry name" value="Thioredoxin-like"/>
    <property type="match status" value="1"/>
</dbReference>
<protein>
    <recommendedName>
        <fullName evidence="1">ClpXP adapter protein SpxH</fullName>
    </recommendedName>
</protein>
<gene>
    <name evidence="1" type="primary">spxH</name>
    <name type="ordered locus">ABC2525</name>
</gene>
<comment type="function">
    <text evidence="1">Adapter protein required for efficient degradation of Spx by ClpXP under non-stress conditions. Interaction with Spx stabilizes Spx and exposes the C-terminus of Spx for recognition and proteolysis by ClpXP.</text>
</comment>
<comment type="subunit">
    <text evidence="1">Interacts with Spx.</text>
</comment>
<comment type="subcellular location">
    <subcellularLocation>
        <location evidence="1">Cytoplasm</location>
    </subcellularLocation>
</comment>
<comment type="similarity">
    <text evidence="1">Belongs to the SpxH family.</text>
</comment>
<organism>
    <name type="scientific">Shouchella clausii (strain KSM-K16)</name>
    <name type="common">Alkalihalobacillus clausii</name>
    <dbReference type="NCBI Taxonomy" id="66692"/>
    <lineage>
        <taxon>Bacteria</taxon>
        <taxon>Bacillati</taxon>
        <taxon>Bacillota</taxon>
        <taxon>Bacilli</taxon>
        <taxon>Bacillales</taxon>
        <taxon>Bacillaceae</taxon>
        <taxon>Shouchella</taxon>
    </lineage>
</organism>
<feature type="chain" id="PRO_0000278681" description="ClpXP adapter protein SpxH">
    <location>
        <begin position="1"/>
        <end position="300"/>
    </location>
</feature>
<accession>Q5WF00</accession>
<keyword id="KW-0963">Cytoplasm</keyword>
<keyword id="KW-1185">Reference proteome</keyword>
<reference key="1">
    <citation type="submission" date="2003-10" db="EMBL/GenBank/DDBJ databases">
        <title>The complete genome sequence of the alkaliphilic Bacillus clausii KSM-K16.</title>
        <authorList>
            <person name="Takaki Y."/>
            <person name="Kageyama Y."/>
            <person name="Shimamura S."/>
            <person name="Suzuki H."/>
            <person name="Nishi S."/>
            <person name="Hatada Y."/>
            <person name="Kawai S."/>
            <person name="Ito S."/>
            <person name="Horikoshi K."/>
        </authorList>
    </citation>
    <scope>NUCLEOTIDE SEQUENCE [LARGE SCALE GENOMIC DNA]</scope>
    <source>
        <strain>KSM-K16</strain>
    </source>
</reference>
<name>SPXH_SHOC1</name>
<sequence length="300" mass="33452">MNAKHRVTSHCDHELGICGISPEANEALPAKKPLEIYTFIDPLCAQCWSMEPILKKLKVEYGHYFRIRVLLAGKLNVWNACEAGKAKYTRPPVWVKGVSSSNMPYAGDIKLSDFHPYKASLAIKAAELQGPKAGHRFLRKLRETLFLQKQNITNEDVLKACANAAGLDVDAFIADLHSPSAAKALQCDVQTTNEMDVDTVPTFVFFNDNSEEAGIKISGQYPFSIYVQLLEDMLGFVPVKATPPTLEGLLQTYGFLATAEVAMVLDLSSEEAEKKLKTLMLQQKVEAVPYEYGTFWKWLM</sequence>
<proteinExistence type="inferred from homology"/>
<evidence type="ECO:0000255" key="1">
    <source>
        <dbReference type="HAMAP-Rule" id="MF_02245"/>
    </source>
</evidence>